<accession>Q6NVD9</accession>
<accession>Q63832</accession>
<accession>Q6P5N4</accession>
<accession>Q8VDD6</accession>
<proteinExistence type="evidence at protein level"/>
<organism>
    <name type="scientific">Mus musculus</name>
    <name type="common">Mouse</name>
    <dbReference type="NCBI Taxonomy" id="10090"/>
    <lineage>
        <taxon>Eukaryota</taxon>
        <taxon>Metazoa</taxon>
        <taxon>Chordata</taxon>
        <taxon>Craniata</taxon>
        <taxon>Vertebrata</taxon>
        <taxon>Euteleostomi</taxon>
        <taxon>Mammalia</taxon>
        <taxon>Eutheria</taxon>
        <taxon>Euarchontoglires</taxon>
        <taxon>Glires</taxon>
        <taxon>Rodentia</taxon>
        <taxon>Myomorpha</taxon>
        <taxon>Muroidea</taxon>
        <taxon>Muridae</taxon>
        <taxon>Murinae</taxon>
        <taxon>Mus</taxon>
        <taxon>Mus</taxon>
    </lineage>
</organism>
<keyword id="KW-0007">Acetylation</keyword>
<keyword id="KW-0025">Alternative splicing</keyword>
<keyword id="KW-1003">Cell membrane</keyword>
<keyword id="KW-0175">Coiled coil</keyword>
<keyword id="KW-0963">Cytoplasm</keyword>
<keyword id="KW-0206">Cytoskeleton</keyword>
<keyword id="KW-0903">Direct protein sequencing</keyword>
<keyword id="KW-0273">Eye lens protein</keyword>
<keyword id="KW-0403">Intermediate filament</keyword>
<keyword id="KW-0472">Membrane</keyword>
<keyword id="KW-0597">Phosphoprotein</keyword>
<keyword id="KW-1185">Reference proteome</keyword>
<keyword id="KW-0677">Repeat</keyword>
<keyword id="KW-0716">Sensory transduction</keyword>
<keyword id="KW-0844">Vision</keyword>
<feature type="initiator methionine" description="Removed" evidence="2">
    <location>
        <position position="1"/>
    </location>
</feature>
<feature type="chain" id="PRO_0000063852" description="Phakinin" evidence="19">
    <location>
        <begin position="2"/>
        <end position="416"/>
    </location>
</feature>
<feature type="domain" description="IF rod" evidence="4">
    <location>
        <begin position="105"/>
        <end position="416"/>
    </location>
</feature>
<feature type="region of interest" description="Disordered" evidence="5">
    <location>
        <begin position="1"/>
        <end position="48"/>
    </location>
</feature>
<feature type="region of interest" description="Head">
    <location>
        <begin position="2"/>
        <end position="115"/>
    </location>
</feature>
<feature type="region of interest" description="Tail">
    <location>
        <begin position="397"/>
        <end position="416"/>
    </location>
</feature>
<feature type="coiled-coil region" evidence="3">
    <location>
        <begin position="116"/>
        <end position="146"/>
    </location>
</feature>
<feature type="coiled-coil region" evidence="3">
    <location>
        <begin position="170"/>
        <end position="249"/>
    </location>
</feature>
<feature type="coiled-coil region" evidence="3">
    <location>
        <begin position="308"/>
        <end position="402"/>
    </location>
</feature>
<feature type="compositionally biased region" description="Polar residues" evidence="5">
    <location>
        <begin position="28"/>
        <end position="48"/>
    </location>
</feature>
<feature type="modified residue" description="N-acetylserine" evidence="2">
    <location>
        <position position="2"/>
    </location>
</feature>
<feature type="modified residue" description="Phosphoserine" evidence="2">
    <location>
        <position position="27"/>
    </location>
</feature>
<feature type="modified residue" description="Phosphoserine" evidence="2">
    <location>
        <position position="33"/>
    </location>
</feature>
<feature type="modified residue" description="Phosphoserine" evidence="2">
    <location>
        <position position="36"/>
    </location>
</feature>
<feature type="modified residue" description="Phosphoserine" evidence="2">
    <location>
        <position position="91"/>
    </location>
</feature>
<feature type="splice variant" id="VSP_011111" description="In isoform 2." evidence="17">
    <location>
        <begin position="1"/>
        <end position="264"/>
    </location>
</feature>
<feature type="sequence conflict" description="In Ref. 4; AAB25419." evidence="19" ref="4">
    <original>A</original>
    <variation>T</variation>
    <location>
        <position position="353"/>
    </location>
</feature>
<gene>
    <name type="primary">Bfsp2</name>
</gene>
<dbReference type="EMBL" id="BC062815">
    <property type="protein sequence ID" value="AAH62815.1"/>
    <property type="molecule type" value="mRNA"/>
</dbReference>
<dbReference type="EMBL" id="BC068172">
    <property type="protein sequence ID" value="AAH68172.1"/>
    <property type="molecule type" value="mRNA"/>
</dbReference>
<dbReference type="EMBL" id="AJ304861">
    <property type="protein sequence ID" value="CAC83162.1"/>
    <property type="molecule type" value="Genomic_DNA"/>
</dbReference>
<dbReference type="EMBL" id="S55549">
    <property type="protein sequence ID" value="AAB25419.1"/>
    <property type="molecule type" value="mRNA"/>
</dbReference>
<dbReference type="CCDS" id="CCDS52903.1">
    <molecule id="Q6NVD9-1"/>
</dbReference>
<dbReference type="PIR" id="I52911">
    <property type="entry name" value="I52911"/>
</dbReference>
<dbReference type="RefSeq" id="NP_001002896.1">
    <molecule id="Q6NVD9-1"/>
    <property type="nucleotide sequence ID" value="NM_001002896.3"/>
</dbReference>
<dbReference type="RefSeq" id="NP_001351443.1">
    <molecule id="Q6NVD9-2"/>
    <property type="nucleotide sequence ID" value="NM_001364514.1"/>
</dbReference>
<dbReference type="RefSeq" id="XP_036010445.1">
    <molecule id="Q6NVD9-2"/>
    <property type="nucleotide sequence ID" value="XM_036154552.1"/>
</dbReference>
<dbReference type="SMR" id="Q6NVD9"/>
<dbReference type="BioGRID" id="223747">
    <property type="interactions" value="1"/>
</dbReference>
<dbReference type="CORUM" id="Q6NVD9"/>
<dbReference type="FunCoup" id="Q6NVD9">
    <property type="interactions" value="97"/>
</dbReference>
<dbReference type="STRING" id="10090.ENSMUSP00000116249"/>
<dbReference type="iPTMnet" id="Q6NVD9"/>
<dbReference type="PhosphoSitePlus" id="Q6NVD9"/>
<dbReference type="PaxDb" id="10090-ENSMUSP00000116249"/>
<dbReference type="ProteomicsDB" id="273678">
    <molecule id="Q6NVD9-1"/>
</dbReference>
<dbReference type="ProteomicsDB" id="273679">
    <molecule id="Q6NVD9-2"/>
</dbReference>
<dbReference type="Antibodypedia" id="33369">
    <property type="antibodies" value="172 antibodies from 18 providers"/>
</dbReference>
<dbReference type="DNASU" id="107993"/>
<dbReference type="Ensembl" id="ENSMUST00000124310.5">
    <molecule id="Q6NVD9-1"/>
    <property type="protein sequence ID" value="ENSMUSP00000116249.3"/>
    <property type="gene ID" value="ENSMUSG00000032556.12"/>
</dbReference>
<dbReference type="GeneID" id="107993"/>
<dbReference type="KEGG" id="mmu:107993"/>
<dbReference type="UCSC" id="uc009rgu.1">
    <molecule id="Q6NVD9-2"/>
    <property type="organism name" value="mouse"/>
</dbReference>
<dbReference type="UCSC" id="uc009rgv.1">
    <molecule id="Q6NVD9-1"/>
    <property type="organism name" value="mouse"/>
</dbReference>
<dbReference type="AGR" id="MGI:1333828"/>
<dbReference type="CTD" id="8419"/>
<dbReference type="MGI" id="MGI:1333828">
    <property type="gene designation" value="Bfsp2"/>
</dbReference>
<dbReference type="VEuPathDB" id="HostDB:ENSMUSG00000032556"/>
<dbReference type="eggNOG" id="ENOG502QTD1">
    <property type="taxonomic scope" value="Eukaryota"/>
</dbReference>
<dbReference type="GeneTree" id="ENSGT00940000159820"/>
<dbReference type="HOGENOM" id="CLU_012560_0_0_1"/>
<dbReference type="InParanoid" id="Q6NVD9"/>
<dbReference type="OMA" id="ETIRIQW"/>
<dbReference type="OrthoDB" id="8851579at2759"/>
<dbReference type="PhylomeDB" id="Q6NVD9"/>
<dbReference type="TreeFam" id="TF332742"/>
<dbReference type="BioGRID-ORCS" id="107993">
    <property type="hits" value="4 hits in 77 CRISPR screens"/>
</dbReference>
<dbReference type="PRO" id="PR:Q6NVD9"/>
<dbReference type="Proteomes" id="UP000000589">
    <property type="component" value="Chromosome 9"/>
</dbReference>
<dbReference type="RNAct" id="Q6NVD9">
    <property type="molecule type" value="protein"/>
</dbReference>
<dbReference type="Bgee" id="ENSMUSG00000032556">
    <property type="expression patterns" value="Expressed in lens of camera-type eye and 75 other cell types or tissues"/>
</dbReference>
<dbReference type="GO" id="GO:0005938">
    <property type="term" value="C:cell cortex"/>
    <property type="evidence" value="ECO:0007669"/>
    <property type="project" value="UniProtKB-SubCell"/>
</dbReference>
<dbReference type="GO" id="GO:0005737">
    <property type="term" value="C:cytoplasm"/>
    <property type="evidence" value="ECO:0000314"/>
    <property type="project" value="MGI"/>
</dbReference>
<dbReference type="GO" id="GO:0005882">
    <property type="term" value="C:intermediate filament"/>
    <property type="evidence" value="ECO:0000314"/>
    <property type="project" value="UniProtKB"/>
</dbReference>
<dbReference type="GO" id="GO:0005886">
    <property type="term" value="C:plasma membrane"/>
    <property type="evidence" value="ECO:0007669"/>
    <property type="project" value="UniProtKB-SubCell"/>
</dbReference>
<dbReference type="GO" id="GO:0005212">
    <property type="term" value="F:structural constituent of eye lens"/>
    <property type="evidence" value="ECO:0000314"/>
    <property type="project" value="MGI"/>
</dbReference>
<dbReference type="GO" id="GO:0048469">
    <property type="term" value="P:cell maturation"/>
    <property type="evidence" value="ECO:0000315"/>
    <property type="project" value="MGI"/>
</dbReference>
<dbReference type="GO" id="GO:0007010">
    <property type="term" value="P:cytoskeleton organization"/>
    <property type="evidence" value="ECO:0000315"/>
    <property type="project" value="MGI"/>
</dbReference>
<dbReference type="GO" id="GO:0045104">
    <property type="term" value="P:intermediate filament cytoskeleton organization"/>
    <property type="evidence" value="ECO:0000315"/>
    <property type="project" value="MGI"/>
</dbReference>
<dbReference type="GO" id="GO:0045109">
    <property type="term" value="P:intermediate filament organization"/>
    <property type="evidence" value="ECO:0000315"/>
    <property type="project" value="UniProtKB"/>
</dbReference>
<dbReference type="GO" id="GO:0070307">
    <property type="term" value="P:lens fiber cell development"/>
    <property type="evidence" value="ECO:0000315"/>
    <property type="project" value="MGI"/>
</dbReference>
<dbReference type="GO" id="GO:0007601">
    <property type="term" value="P:visual perception"/>
    <property type="evidence" value="ECO:0007669"/>
    <property type="project" value="UniProtKB-KW"/>
</dbReference>
<dbReference type="Gene3D" id="1.20.5.170">
    <property type="match status" value="1"/>
</dbReference>
<dbReference type="Gene3D" id="1.20.5.500">
    <property type="entry name" value="Single helix bin"/>
    <property type="match status" value="1"/>
</dbReference>
<dbReference type="Gene3D" id="1.20.5.1160">
    <property type="entry name" value="Vasodilator-stimulated phosphoprotein"/>
    <property type="match status" value="1"/>
</dbReference>
<dbReference type="InterPro" id="IPR039008">
    <property type="entry name" value="IF_rod_dom"/>
</dbReference>
<dbReference type="InterPro" id="IPR002957">
    <property type="entry name" value="Keratin_I"/>
</dbReference>
<dbReference type="PANTHER" id="PTHR23239">
    <property type="entry name" value="INTERMEDIATE FILAMENT"/>
    <property type="match status" value="1"/>
</dbReference>
<dbReference type="PANTHER" id="PTHR23239:SF32">
    <property type="entry name" value="PHAKININ"/>
    <property type="match status" value="1"/>
</dbReference>
<dbReference type="Pfam" id="PF00038">
    <property type="entry name" value="Filament"/>
    <property type="match status" value="1"/>
</dbReference>
<dbReference type="PRINTS" id="PR01248">
    <property type="entry name" value="TYPE1KERATIN"/>
</dbReference>
<dbReference type="SMART" id="SM01391">
    <property type="entry name" value="Filament"/>
    <property type="match status" value="1"/>
</dbReference>
<dbReference type="SUPFAM" id="SSF64593">
    <property type="entry name" value="Intermediate filament protein, coiled coil region"/>
    <property type="match status" value="1"/>
</dbReference>
<dbReference type="PROSITE" id="PS51842">
    <property type="entry name" value="IF_ROD_2"/>
    <property type="match status" value="1"/>
</dbReference>
<protein>
    <recommendedName>
        <fullName evidence="18">Phakinin</fullName>
    </recommendedName>
    <alternativeName>
        <fullName>49 kDa cytoskeletal protein</fullName>
    </alternativeName>
    <alternativeName>
        <fullName evidence="16">Beaded filament structural protein 2</fullName>
    </alternativeName>
    <alternativeName>
        <fullName evidence="1">Lens fiber cell beaded filament protein CP 47</fullName>
        <shortName evidence="1">CP47</shortName>
    </alternativeName>
    <alternativeName>
        <fullName evidence="15">Lens fiber cell beaded filament protein CP 49</fullName>
        <shortName evidence="15">CP49</shortName>
    </alternativeName>
    <alternativeName>
        <fullName evidence="1">Lens intermediate filament-like light</fullName>
        <shortName evidence="1">LIFL-L</shortName>
    </alternativeName>
</protein>
<sequence length="416" mass="45740">MSKRRVAADLPSGTNSSMPVQRHRVSSLRGTHSPSSLDSPPASRTSAVGSLVRAPGVYVGVAPSGGIGGLGARVTRRALGISSVFLQGLRSSGLANVPAPGPERDHTTVEDLGGCLVEYMTKVHALEQVSQELETQLRAHLESKAKSSGGWDALRASWASSYQQVGEAVLENARLLLQMETIQAGADDFKERYENEQPFRKAAEEEVSSLYKVIDEANLTKTDLEHQIESLKEELGFLSRSYEEDVKVLYKQLAGSELEQADVPMGTGLDDVLETIRVQWERDVEKNRAEAGALLQAKQQTEVVHVSQTQEEKLAAALSVELHDTSRQVQSLQAETESLRALKRGLENSLHDAQHWHDMELQNLGAVVGRLEAELAEIRSETEQQQQERAHLLACKSQLQKDVASYHALLDREENN</sequence>
<name>BFSP2_MOUSE</name>
<reference evidence="22" key="1">
    <citation type="journal article" date="2004" name="Genome Res.">
        <title>The status, quality, and expansion of the NIH full-length cDNA project: the Mammalian Gene Collection (MGC).</title>
        <authorList>
            <consortium name="The MGC Project Team"/>
        </authorList>
    </citation>
    <scope>NUCLEOTIDE SEQUENCE [LARGE SCALE MRNA] (ISOFORMS 1 AND 2)</scope>
    <source>
        <strain evidence="21 22">C57BL/6J</strain>
        <tissue evidence="22">Eye</tissue>
        <tissue evidence="21">Thymus</tissue>
    </source>
</reference>
<reference evidence="19 23" key="2">
    <citation type="journal article" date="2003" name="Exp. Eye Res.">
        <title>Knockout of the intermediate filament protein CP49 destabilises the lens fibre cell cytoskeleton and decreases lens optical quality, but does not induce cataract.</title>
        <authorList>
            <person name="Sandilands A."/>
            <person name="Prescott A.R."/>
            <person name="Wegener A."/>
            <person name="Zoltoski R.K."/>
            <person name="Hutcheson A.M."/>
            <person name="Masaki S."/>
            <person name="Kuszak J.R."/>
            <person name="Quinlan R.A."/>
        </authorList>
    </citation>
    <scope>NUCLEOTIDE SEQUENCE [GENOMIC DNA] OF 1-164 (ISOFORM 1)</scope>
    <scope>POLYMORPHISM</scope>
    <source>
        <strain evidence="7">129/SvJ</strain>
    </source>
</reference>
<reference key="3">
    <citation type="journal article" date="2005" name="Proteomics">
        <title>Eye lens proteomics: from global approach to detailed information about phakinin and gamma E and F crystallin genes.</title>
        <authorList>
            <person name="Hoehenwarter W."/>
            <person name="Kumar N.M."/>
            <person name="Wacker M."/>
            <person name="Zimny-Arndt U."/>
            <person name="Klose J."/>
            <person name="Jungblut P.R."/>
        </authorList>
    </citation>
    <scope>PROTEIN SEQUENCE OF 6-22; 30-44; 54-73; 78-104; 123-138; 147-247; 252-340; 371-389 AND 402-416</scope>
    <source>
        <strain>C57BL/6J</strain>
        <tissue>Lens</tissue>
    </source>
</reference>
<reference evidence="19 20" key="4">
    <citation type="journal article" date="1993" name="Curr. Eye Res.">
        <title>cDNA analysis of the 49 kDa lens fiber cell cytoskeletal protein: a new, lens-specific member of the intermediate filament family?</title>
        <authorList>
            <person name="Hess J.F."/>
            <person name="Casselman J.T."/>
            <person name="FitzGerald P.G."/>
        </authorList>
    </citation>
    <scope>NUCLEOTIDE SEQUENCE [MRNA] OF 198-416 (ISOFORM 1)</scope>
    <scope>TISSUE SPECIFICITY</scope>
    <source>
        <tissue evidence="14">Lens</tissue>
    </source>
</reference>
<reference key="5">
    <citation type="journal article" date="2002" name="Invest. Ophthalmol. Vis. Sci.">
        <title>Targeted genomic deletion of the lens-specific intermediate filament protein CP49.</title>
        <authorList>
            <person name="Alizadeh A."/>
            <person name="Clark J.I."/>
            <person name="Seeberger T."/>
            <person name="Hess J."/>
            <person name="Blankenship T."/>
            <person name="Spicer A."/>
            <person name="FitzGerald P.G."/>
        </authorList>
    </citation>
    <scope>FUNCTION</scope>
    <scope>TISSUE SPECIFICITY</scope>
    <scope>DISRUPTION PHENOTYPE</scope>
</reference>
<reference evidence="19 23" key="6">
    <citation type="journal article" date="2004" name="Exp. Eye Res.">
        <title>Bfsp2 mutation found in mouse 129 strains causes the loss of CP49' and induces vimentin-dependent changes in the lens fibre cell cytoskeleton.</title>
        <authorList>
            <person name="Sandilands A."/>
            <person name="Wang X."/>
            <person name="Hutcheson A.M."/>
            <person name="James J."/>
            <person name="Prescott A.R."/>
            <person name="Wegener A."/>
            <person name="Pekny M."/>
            <person name="Gong X."/>
            <person name="Quinlan R.A."/>
        </authorList>
    </citation>
    <scope>FUNCTION</scope>
    <scope>TISSUE SPECIFICITY</scope>
    <scope>POLYMORPHISM</scope>
    <scope>DISRUPTION PHENOTYPE</scope>
    <source>
        <strain evidence="9">129/SvJ</strain>
    </source>
</reference>
<reference key="7">
    <citation type="journal article" date="2004" name="Invest. Ophthalmol. Vis. Sci.">
        <title>Characterization of a mutation in the lens-specific CP49 in the 129 strain of mouse.</title>
        <authorList>
            <person name="Alizadeh A."/>
            <person name="Clark J."/>
            <person name="Seeberger T."/>
            <person name="Hess J."/>
            <person name="Blankenship T."/>
            <person name="FitzGerald P.G."/>
        </authorList>
    </citation>
    <scope>TISSUE SPECIFICITY</scope>
    <scope>POLYMORPHISM</scope>
    <source>
        <strain>129/SvJ</strain>
        <strain evidence="8">C57BL/6J</strain>
    </source>
</reference>
<reference key="8">
    <citation type="journal article" date="2008" name="J. Biol. Chem.">
        <title>A role for lengsin, a recruited enzyme, in terminal differentiation in the vertebrate lens.</title>
        <authorList>
            <person name="Wyatt K."/>
            <person name="Gao C."/>
            <person name="Tsai J.-Y."/>
            <person name="Fariss R.N."/>
            <person name="Ray S."/>
            <person name="Wistow G."/>
        </authorList>
    </citation>
    <scope>INTERACTION WITH LGSN</scope>
</reference>
<reference key="9">
    <citation type="journal article" date="2009" name="Invest. Ophthalmol. Vis. Sci.">
        <title>Periplakin interactions with lens intermediate and beaded filaments.</title>
        <authorList>
            <person name="Yoon K.H."/>
            <person name="FitzGerald P.G."/>
        </authorList>
    </citation>
    <scope>IDENTIFICATION IN A COMPLEX WITH PPL AND BFSP1</scope>
    <scope>INTERACTION WITH PPL; BFSP1 AND VIM</scope>
    <scope>TISSUE SPECIFICITY</scope>
</reference>
<reference key="10">
    <citation type="journal article" date="2011" name="Dev. Biol.">
        <title>Periaxin is required for hexagonal geometry and membrane organization of mature lens fibers.</title>
        <authorList>
            <person name="Maddala R."/>
            <person name="Skiba N.P."/>
            <person name="Lalane R. III"/>
            <person name="Sherman D.L."/>
            <person name="Brophy P.J."/>
            <person name="Rao P.V."/>
        </authorList>
    </citation>
    <scope>TISSUE SPECIFICITY</scope>
    <scope>IDENTIFICATION IN A COMPLEX WITH EZR; AHNAK; BFSP1; PRX; ANK2; PLEC; VIM AND SPECTRIN</scope>
</reference>
<reference key="11">
    <citation type="journal article" date="2016" name="Mol. Vis.">
        <title>Expression of the type VI intermediate filament proteins CP49 and filensin in the mouse lens epithelium.</title>
        <authorList>
            <person name="FitzGerald P."/>
            <person name="Sun N."/>
            <person name="Shibata B."/>
            <person name="Hess J.F."/>
        </authorList>
    </citation>
    <scope>FUNCTION</scope>
    <scope>TISSUE SPECIFICITY</scope>
    <scope>DEVELOPMENTAL STAGE</scope>
    <scope>DISRUPTION PHENOTYPE</scope>
</reference>
<comment type="function">
    <text evidence="6 9 13">Required for the correct formation of lens intermediate filaments as part of a complex composed of BFSP1, BFSP2 and CRYAA (PubMed:15037121, PubMed:27559293). Plays a role in maintenance of retinal lens optical clarity (PubMed:12454043).</text>
</comment>
<comment type="subunit">
    <text evidence="1 10 11 12">Part of a complex required for lens intermediate filament formation composed of BFSP1, BFSP2 and CRYAA (By similarity). Found in a complex composed of PPL (via C-terminal linker domain), BFSP1 and BFSP2 in the retinal lens (PubMed:19029034). Within the complex interacts with PPL (via C-terminal linker domain) and with BFSP1 (PubMed:19029034). Identified in a complex that contains VIM, EZR, AHNAK, BFSP1, BFSP2, ANK2, PLEC, PRX and spectrin (PubMed:21745462). Interacts with LGSN (PubMed:18178558). Interacts with VIM (PubMed:19029034).</text>
</comment>
<comment type="subcellular location">
    <subcellularLocation>
        <location evidence="2">Cell membrane</location>
        <topology evidence="2">Peripheral membrane protein</topology>
        <orientation evidence="2">Cytoplasmic side</orientation>
    </subcellularLocation>
    <subcellularLocation>
        <location evidence="13">Cytoplasm</location>
    </subcellularLocation>
    <subcellularLocation>
        <location evidence="2">Cytoplasm</location>
        <location evidence="2">Cytoskeleton</location>
    </subcellularLocation>
    <subcellularLocation>
        <location evidence="2">Cytoplasm</location>
        <location evidence="2">Cell cortex</location>
    </subcellularLocation>
    <text evidence="2">Expressed primarily at the plasma membrane in peripheral lens fiber cells, however also localizes to the cytoplasm in mature lens fiber cells.</text>
</comment>
<comment type="alternative products">
    <event type="alternative splicing"/>
    <isoform>
        <id>Q6NVD9-1</id>
        <name>1</name>
        <sequence type="displayed"/>
    </isoform>
    <isoform>
        <id>Q6NVD9-2</id>
        <name>2</name>
        <sequence type="described" ref="VSP_011111"/>
    </isoform>
</comment>
<comment type="tissue specificity">
    <text evidence="6 8 9 11 12 13 14">Detected in retina lens fiber cells (at protein level) (PubMed:12454043, PubMed:14985306, PubMed:15037121, PubMed:19029034, PubMed:21745462, PubMed:27559293, PubMed:7679620). Also expressed in the lens epithelium, abundantly expressed in the anterior and anterolateral epithelium, less frequently expressed nearer the lens coronal equator (at protein level) (PubMed:27559293).</text>
</comment>
<comment type="developmental stage">
    <text evidence="13">Expressed in the retinal lens fiber cells from postnatal day 28 (P28) to P45 (PubMed:27559293). Expressed in retinal lens beaded filament structures from P37 onwards (PubMed:27559293).</text>
</comment>
<comment type="polymorphism">
    <text evidence="7 8 9">In strains 101, 129/SvJ and CBA, a polymorphism deletes the acceptor site of exon 2 which causes exon 1 to be spliced to exon 3 and generates a frameshift and premature stop codon (PubMed:12573667, PubMed:15037121). The polymorphism leads to retinal lens fiber cell nuclear opacity beginning at 1 month of age, opacity becomes more pronounced with age (PubMed:14985306). Reduced intermediate filaments and loss of the association of the lens fiber cell cytoskeleton with the plasma membrane (PubMed:14985306, PubMed:15037121).</text>
</comment>
<comment type="disruption phenotype">
    <text evidence="6 9 13">No overall change in lens fiber cell organization, regularity of hexagonal profiles, or positioning of cell nuclei (PubMed:12454043). Opacification of the retinal lens is evident at 1 month of age, with progressive loss of clarity to 10 months of age (PubMed:12454043). Reduced abundance and loss of distinction of intermediate filaments in retinal lens fiber cells (PubMed:15037121). Decreased protein abundance of BFSP1 in the retinal lens (PubMed:12454043). Complete loss of beaded filament structures in lens epithelial cells (PubMed:27559293). BFSP2 and VIM double knockout mice show a complete loss of the cytoplasmic cytoskeleton in retinal lens fiber cells (PubMed:15037121).</text>
</comment>
<comment type="similarity">
    <text evidence="4">Belongs to the intermediate filament family.</text>
</comment>
<evidence type="ECO:0000250" key="1">
    <source>
        <dbReference type="UniProtKB" id="Q13515"/>
    </source>
</evidence>
<evidence type="ECO:0000250" key="2">
    <source>
        <dbReference type="UniProtKB" id="Q28177"/>
    </source>
</evidence>
<evidence type="ECO:0000255" key="3"/>
<evidence type="ECO:0000255" key="4">
    <source>
        <dbReference type="PROSITE-ProRule" id="PRU01188"/>
    </source>
</evidence>
<evidence type="ECO:0000256" key="5">
    <source>
        <dbReference type="SAM" id="MobiDB-lite"/>
    </source>
</evidence>
<evidence type="ECO:0000269" key="6">
    <source>
    </source>
</evidence>
<evidence type="ECO:0000269" key="7">
    <source>
    </source>
</evidence>
<evidence type="ECO:0000269" key="8">
    <source>
    </source>
</evidence>
<evidence type="ECO:0000269" key="9">
    <source>
    </source>
</evidence>
<evidence type="ECO:0000269" key="10">
    <source>
    </source>
</evidence>
<evidence type="ECO:0000269" key="11">
    <source>
    </source>
</evidence>
<evidence type="ECO:0000269" key="12">
    <source>
    </source>
</evidence>
<evidence type="ECO:0000269" key="13">
    <source>
    </source>
</evidence>
<evidence type="ECO:0000269" key="14">
    <source>
    </source>
</evidence>
<evidence type="ECO:0000303" key="15">
    <source>
    </source>
</evidence>
<evidence type="ECO:0000303" key="16">
    <source>
    </source>
</evidence>
<evidence type="ECO:0000303" key="17">
    <source>
    </source>
</evidence>
<evidence type="ECO:0000303" key="18">
    <source>
    </source>
</evidence>
<evidence type="ECO:0000305" key="19"/>
<evidence type="ECO:0000312" key="20">
    <source>
        <dbReference type="EMBL" id="AAB25419.1"/>
    </source>
</evidence>
<evidence type="ECO:0000312" key="21">
    <source>
        <dbReference type="EMBL" id="AAH62815.1"/>
    </source>
</evidence>
<evidence type="ECO:0000312" key="22">
    <source>
        <dbReference type="EMBL" id="AAH68172.1"/>
    </source>
</evidence>
<evidence type="ECO:0000312" key="23">
    <source>
        <dbReference type="EMBL" id="CAC83162.1"/>
    </source>
</evidence>